<organism>
    <name type="scientific">Orgyia pseudotsugata multicapsid polyhedrosis virus</name>
    <name type="common">OpMNPV</name>
    <dbReference type="NCBI Taxonomy" id="262177"/>
    <lineage>
        <taxon>Viruses</taxon>
        <taxon>Viruses incertae sedis</taxon>
        <taxon>Naldaviricetes</taxon>
        <taxon>Lefavirales</taxon>
        <taxon>Baculoviridae</taxon>
        <taxon>Alphabaculovirus</taxon>
        <taxon>Alphabaculovirus orpseudotsugatae</taxon>
    </lineage>
</organism>
<reference key="1">
    <citation type="journal article" date="1997" name="Virology">
        <title>The sequence of the Orgyia pseudotsugata multinucleocapsid nuclear polyhedrosis virus genome.</title>
        <authorList>
            <person name="Ahrens C.H."/>
            <person name="Russell R.R."/>
            <person name="Funk C.J."/>
            <person name="Evans J."/>
            <person name="Harwood S."/>
            <person name="Rohrmann G.F."/>
        </authorList>
    </citation>
    <scope>NUCLEOTIDE SEQUENCE [LARGE SCALE GENOMIC DNA]</scope>
</reference>
<feature type="chain" id="PRO_0000132992" description="Uncharacterized 9.7 kDa protein">
    <location>
        <begin position="1"/>
        <end position="82"/>
    </location>
</feature>
<gene>
    <name type="ORF">ORF60</name>
</gene>
<protein>
    <recommendedName>
        <fullName>Uncharacterized 9.7 kDa protein</fullName>
    </recommendedName>
</protein>
<name>Y056_NPVOP</name>
<sequence>MLRALRRRFKPAGDERRREENVVLCPRCYFVAPGSISVADYTRMHIKFNEQFADECSNNLAVTQPKTWFNYTNCPLLYYSLC</sequence>
<dbReference type="EMBL" id="U75930">
    <property type="protein sequence ID" value="AAC59059.1"/>
    <property type="molecule type" value="Genomic_DNA"/>
</dbReference>
<dbReference type="RefSeq" id="NP_046216.1">
    <property type="nucleotide sequence ID" value="NC_001875.2"/>
</dbReference>
<dbReference type="KEGG" id="vg:911984"/>
<dbReference type="OrthoDB" id="19806at10239"/>
<dbReference type="Proteomes" id="UP000009248">
    <property type="component" value="Genome"/>
</dbReference>
<dbReference type="InterPro" id="IPR020122">
    <property type="entry name" value="Alphabaculovirus_Y056"/>
</dbReference>
<dbReference type="Pfam" id="PF10891">
    <property type="entry name" value="DUF2719"/>
    <property type="match status" value="1"/>
</dbReference>
<keyword id="KW-1185">Reference proteome</keyword>
<accession>O10314</accession>
<proteinExistence type="predicted"/>
<organismHost>
    <name type="scientific">Orgyia pseudotsugata</name>
    <name type="common">Douglas-fir tussock moth</name>
    <dbReference type="NCBI Taxonomy" id="33414"/>
</organismHost>